<reference key="1">
    <citation type="journal article" date="2007" name="Proc. Natl. Acad. Sci. U.S.A.">
        <title>Genome plasticity of BCG and impact on vaccine efficacy.</title>
        <authorList>
            <person name="Brosch R."/>
            <person name="Gordon S.V."/>
            <person name="Garnier T."/>
            <person name="Eiglmeier K."/>
            <person name="Frigui W."/>
            <person name="Valenti P."/>
            <person name="Dos Santos S."/>
            <person name="Duthoy S."/>
            <person name="Lacroix C."/>
            <person name="Garcia-Pelayo C."/>
            <person name="Inwald J.K."/>
            <person name="Golby P."/>
            <person name="Garcia J.N."/>
            <person name="Hewinson R.G."/>
            <person name="Behr M.A."/>
            <person name="Quail M.A."/>
            <person name="Churcher C."/>
            <person name="Barrell B.G."/>
            <person name="Parkhill J."/>
            <person name="Cole S.T."/>
        </authorList>
    </citation>
    <scope>NUCLEOTIDE SEQUENCE [LARGE SCALE GENOMIC DNA]</scope>
    <source>
        <strain>BCG / Pasteur 1173P2</strain>
    </source>
</reference>
<protein>
    <recommendedName>
        <fullName evidence="1">Immunity factor for TNT homolog</fullName>
        <shortName evidence="1">IFT homolog</shortName>
    </recommendedName>
    <alternativeName>
        <fullName evidence="1">Tuberculosis necrotizing toxin homolog antitoxin</fullName>
        <shortName evidence="1">TNT homolog antitoxin</shortName>
    </alternativeName>
</protein>
<feature type="chain" id="PRO_0000437789" description="Immunity factor for TNT homolog">
    <location>
        <begin position="1"/>
        <end position="176"/>
    </location>
</feature>
<accession>A0A0H3MAZ5</accession>
<name>IFTNT_MYCBP</name>
<gene>
    <name evidence="2" type="ordered locus">BCG_3959c</name>
</gene>
<dbReference type="EMBL" id="AM408590">
    <property type="protein sequence ID" value="CAL73949.1"/>
    <property type="molecule type" value="Genomic_DNA"/>
</dbReference>
<dbReference type="SMR" id="A0A0H3MAZ5"/>
<dbReference type="KEGG" id="mbb:BCG_3959c"/>
<dbReference type="HOGENOM" id="CLU_1546538_0_0_11"/>
<dbReference type="Proteomes" id="UP000001472">
    <property type="component" value="Chromosome"/>
</dbReference>
<dbReference type="InterPro" id="IPR028953">
    <property type="entry name" value="Imm_IFT-like"/>
</dbReference>
<dbReference type="Pfam" id="PF15598">
    <property type="entry name" value="Imm61"/>
    <property type="match status" value="1"/>
</dbReference>
<evidence type="ECO:0000250" key="1">
    <source>
        <dbReference type="UniProtKB" id="O05443"/>
    </source>
</evidence>
<evidence type="ECO:0000312" key="2">
    <source>
        <dbReference type="EMBL" id="CAL73949.1"/>
    </source>
</evidence>
<organism>
    <name type="scientific">Mycobacterium bovis (strain BCG / Pasteur 1173P2)</name>
    <dbReference type="NCBI Taxonomy" id="410289"/>
    <lineage>
        <taxon>Bacteria</taxon>
        <taxon>Bacillati</taxon>
        <taxon>Actinomycetota</taxon>
        <taxon>Actinomycetes</taxon>
        <taxon>Mycobacteriales</taxon>
        <taxon>Mycobacteriaceae</taxon>
        <taxon>Mycobacterium</taxon>
        <taxon>Mycobacterium tuberculosis complex</taxon>
    </lineage>
</organism>
<proteinExistence type="inferred from homology"/>
<sequence length="176" mass="19822">MTIGVDLSTDLQDWIRLSGMNMIQGSETNDGRTILWNKGGEVRYFIDRLAGWYVITSSDRMSREGYEFAAASMSVIEKYLYGYFGGSVRSERELPAIRAPFQPEELMPEYSIGTMTFAGRQRDTLIDSSGTVVAITAADRLVELSHYLDVSVNVIKDSFLDSEGKPLFTLWKDYKG</sequence>
<comment type="function">
    <text evidence="1">Antitoxin for tuberculosis necrotizing toxin (TNT) homolog. Acts by binding directly to TNT, which inhibits NAD(+) glycohydrolase activity of TNT and protects M.bovis from self-poisoning.</text>
</comment>
<comment type="subunit">
    <text evidence="1">Interacts with the tuberculosis necrotizing toxin (TNT) homolog, the C-terminal domain of the outer membrane channel protein CpnT.</text>
</comment>